<proteinExistence type="evidence at transcript level"/>
<name>ASB7_MOUSE</name>
<evidence type="ECO:0000250" key="1"/>
<evidence type="ECO:0000250" key="2">
    <source>
        <dbReference type="UniProtKB" id="Q9H672"/>
    </source>
</evidence>
<evidence type="ECO:0000255" key="3">
    <source>
        <dbReference type="PROSITE-ProRule" id="PRU00194"/>
    </source>
</evidence>
<evidence type="ECO:0000269" key="4">
    <source>
    </source>
</evidence>
<evidence type="ECO:0000305" key="5"/>
<protein>
    <recommendedName>
        <fullName>Ankyrin repeat and SOCS box protein 7</fullName>
        <shortName>ASB-7</shortName>
    </recommendedName>
</protein>
<feature type="chain" id="PRO_0000066937" description="Ankyrin repeat and SOCS box protein 7">
    <location>
        <begin position="1"/>
        <end position="318"/>
    </location>
</feature>
<feature type="repeat" description="ANK 1">
    <location>
        <begin position="13"/>
        <end position="42"/>
    </location>
</feature>
<feature type="repeat" description="ANK 2">
    <location>
        <begin position="46"/>
        <end position="75"/>
    </location>
</feature>
<feature type="repeat" description="ANK 3">
    <location>
        <begin position="80"/>
        <end position="109"/>
    </location>
</feature>
<feature type="repeat" description="ANK 4">
    <location>
        <begin position="116"/>
        <end position="145"/>
    </location>
</feature>
<feature type="repeat" description="ANK 5">
    <location>
        <begin position="149"/>
        <end position="178"/>
    </location>
</feature>
<feature type="repeat" description="ANK 6">
    <location>
        <begin position="180"/>
        <end position="208"/>
    </location>
</feature>
<feature type="repeat" description="ANK 7">
    <location>
        <begin position="213"/>
        <end position="242"/>
    </location>
</feature>
<feature type="domain" description="SOCS box" evidence="3">
    <location>
        <begin position="265"/>
        <end position="318"/>
    </location>
</feature>
<feature type="sequence conflict" description="In Ref. 1; AAK97490." evidence="5" ref="1">
    <original>R</original>
    <variation>S</variation>
    <location>
        <position position="273"/>
    </location>
</feature>
<organism>
    <name type="scientific">Mus musculus</name>
    <name type="common">Mouse</name>
    <dbReference type="NCBI Taxonomy" id="10090"/>
    <lineage>
        <taxon>Eukaryota</taxon>
        <taxon>Metazoa</taxon>
        <taxon>Chordata</taxon>
        <taxon>Craniata</taxon>
        <taxon>Vertebrata</taxon>
        <taxon>Euteleostomi</taxon>
        <taxon>Mammalia</taxon>
        <taxon>Eutheria</taxon>
        <taxon>Euarchontoglires</taxon>
        <taxon>Glires</taxon>
        <taxon>Rodentia</taxon>
        <taxon>Myomorpha</taxon>
        <taxon>Muroidea</taxon>
        <taxon>Muridae</taxon>
        <taxon>Murinae</taxon>
        <taxon>Mus</taxon>
        <taxon>Mus</taxon>
    </lineage>
</organism>
<gene>
    <name type="primary">Asb7</name>
</gene>
<accession>Q91ZU0</accession>
<accession>G3UVX4</accession>
<reference key="1">
    <citation type="journal article" date="2001" name="Mol. Cell. Biol.">
        <title>Functional analysis of Asb-1 using genetic modification in mice.</title>
        <authorList>
            <person name="Kile B.T."/>
            <person name="Metcalf D."/>
            <person name="Mifsud S."/>
            <person name="DiRago L."/>
            <person name="Nicola N.A."/>
            <person name="Hilton D.J."/>
            <person name="Alexander W.S."/>
        </authorList>
    </citation>
    <scope>NUCLEOTIDE SEQUENCE [MRNA]</scope>
</reference>
<reference key="2">
    <citation type="journal article" date="2009" name="PLoS Biol.">
        <title>Lineage-specific biology revealed by a finished genome assembly of the mouse.</title>
        <authorList>
            <person name="Church D.M."/>
            <person name="Goodstadt L."/>
            <person name="Hillier L.W."/>
            <person name="Zody M.C."/>
            <person name="Goldstein S."/>
            <person name="She X."/>
            <person name="Bult C.J."/>
            <person name="Agarwala R."/>
            <person name="Cherry J.L."/>
            <person name="DiCuccio M."/>
            <person name="Hlavina W."/>
            <person name="Kapustin Y."/>
            <person name="Meric P."/>
            <person name="Maglott D."/>
            <person name="Birtle Z."/>
            <person name="Marques A.C."/>
            <person name="Graves T."/>
            <person name="Zhou S."/>
            <person name="Teague B."/>
            <person name="Potamousis K."/>
            <person name="Churas C."/>
            <person name="Place M."/>
            <person name="Herschleb J."/>
            <person name="Runnheim R."/>
            <person name="Forrest D."/>
            <person name="Amos-Landgraf J."/>
            <person name="Schwartz D.C."/>
            <person name="Cheng Z."/>
            <person name="Lindblad-Toh K."/>
            <person name="Eichler E.E."/>
            <person name="Ponting C.P."/>
        </authorList>
    </citation>
    <scope>NUCLEOTIDE SEQUENCE [LARGE SCALE GENOMIC DNA]</scope>
    <source>
        <strain>C57BL/6J</strain>
    </source>
</reference>
<reference key="3">
    <citation type="submission" date="2005-09" db="EMBL/GenBank/DDBJ databases">
        <authorList>
            <person name="Mural R.J."/>
            <person name="Adams M.D."/>
            <person name="Myers E.W."/>
            <person name="Smith H.O."/>
            <person name="Venter J.C."/>
        </authorList>
    </citation>
    <scope>NUCLEOTIDE SEQUENCE [LARGE SCALE GENOMIC DNA]</scope>
</reference>
<reference key="4">
    <citation type="journal article" date="2020" name="Front. Cell Dev. Biol.">
        <title>ASB7 Is a Novel Regulator of Cytoskeletal Organization During Oocyte Maturation.</title>
        <authorList>
            <person name="Liu Y."/>
            <person name="Li X."/>
            <person name="He Y."/>
            <person name="Wang H."/>
            <person name="Gao M."/>
            <person name="Han L."/>
            <person name="Qiu D."/>
            <person name="Ling L."/>
            <person name="Liu H."/>
            <person name="Gu L."/>
        </authorList>
    </citation>
    <scope>FUNCTION</scope>
    <scope>DISRUPTION PHENOTYPE</scope>
    <scope>SUBCELLULAR LOCATION</scope>
</reference>
<comment type="function">
    <text evidence="2 4">Probable substrate-recognition component of a SCF-like ECS (Elongin-Cullin-SOCS-box protein) E3 ubiquitin-protein ligase complex which mediates the ubiquitination and subsequent proteasomal degradation of target proteins. Plays a role in spindle dynamics and genome integrity by targeting the mitotic progression protein PSRC1 for proteasomal degradation in a cell cycle-dependent manner (By similarity). Also participates in meiosis by mediating the proper attachment between kinetochores and microtubules (By similarity).</text>
</comment>
<comment type="pathway">
    <text>Protein modification; protein ubiquitination.</text>
</comment>
<comment type="subunit">
    <text evidence="2">Interacts with CUL5. Interacts with RNF7. Interacts with PSRC1.</text>
</comment>
<comment type="subcellular location">
    <subcellularLocation>
        <location evidence="4">Nucleus</location>
    </subcellularLocation>
    <subcellularLocation>
        <location evidence="4">Cytoplasm</location>
    </subcellularLocation>
</comment>
<comment type="domain">
    <text evidence="1">The SOCS box domain mediates the interaction with the Elongin BC complex, an adapter module in different E3 ubiquitin-protein ligase complexes.</text>
</comment>
<comment type="disruption phenotype">
    <text evidence="4">Asb7 knockdown disturbs the meiotic progression and cytokinesis during mouse oocyte maturation.</text>
</comment>
<comment type="similarity">
    <text evidence="5">Belongs to the ankyrin SOCS box (ASB) family.</text>
</comment>
<dbReference type="EMBL" id="AF398968">
    <property type="protein sequence ID" value="AAK97490.1"/>
    <property type="molecule type" value="mRNA"/>
</dbReference>
<dbReference type="EMBL" id="AC115761">
    <property type="status" value="NOT_ANNOTATED_CDS"/>
    <property type="molecule type" value="Genomic_DNA"/>
</dbReference>
<dbReference type="EMBL" id="AC120791">
    <property type="status" value="NOT_ANNOTATED_CDS"/>
    <property type="molecule type" value="Genomic_DNA"/>
</dbReference>
<dbReference type="EMBL" id="CH466543">
    <property type="protein sequence ID" value="EDL07214.1"/>
    <property type="molecule type" value="Genomic_DNA"/>
</dbReference>
<dbReference type="CCDS" id="CCDS21346.1"/>
<dbReference type="RefSeq" id="NP_536691.2">
    <property type="nucleotide sequence ID" value="NM_080443.2"/>
</dbReference>
<dbReference type="RefSeq" id="XP_006540630.1">
    <property type="nucleotide sequence ID" value="XM_006540567.5"/>
</dbReference>
<dbReference type="SMR" id="Q91ZU0"/>
<dbReference type="FunCoup" id="Q91ZU0">
    <property type="interactions" value="580"/>
</dbReference>
<dbReference type="STRING" id="10090.ENSMUSP00000122395"/>
<dbReference type="GlyGen" id="Q91ZU0">
    <property type="glycosylation" value="1 site, 1 O-linked glycan (1 site)"/>
</dbReference>
<dbReference type="iPTMnet" id="Q91ZU0"/>
<dbReference type="PhosphoSitePlus" id="Q91ZU0"/>
<dbReference type="PaxDb" id="10090-ENSMUSP00000122395"/>
<dbReference type="ProteomicsDB" id="277252"/>
<dbReference type="Antibodypedia" id="1147">
    <property type="antibodies" value="149 antibodies from 20 providers"/>
</dbReference>
<dbReference type="Ensembl" id="ENSMUST00000124899.8">
    <property type="protein sequence ID" value="ENSMUSP00000122395.2"/>
    <property type="gene ID" value="ENSMUSG00000030509.18"/>
</dbReference>
<dbReference type="GeneID" id="117589"/>
<dbReference type="KEGG" id="mmu:117589"/>
<dbReference type="UCSC" id="uc009hhn.3">
    <property type="organism name" value="mouse"/>
</dbReference>
<dbReference type="AGR" id="MGI:2152835"/>
<dbReference type="CTD" id="140460"/>
<dbReference type="MGI" id="MGI:2152835">
    <property type="gene designation" value="Asb7"/>
</dbReference>
<dbReference type="VEuPathDB" id="HostDB:ENSMUSG00000030509"/>
<dbReference type="eggNOG" id="KOG4177">
    <property type="taxonomic scope" value="Eukaryota"/>
</dbReference>
<dbReference type="GeneTree" id="ENSGT00940000158068"/>
<dbReference type="HOGENOM" id="CLU_084795_0_0_1"/>
<dbReference type="InParanoid" id="Q91ZU0"/>
<dbReference type="OMA" id="CNGWTLL"/>
<dbReference type="OrthoDB" id="539213at2759"/>
<dbReference type="PhylomeDB" id="Q91ZU0"/>
<dbReference type="TreeFam" id="TF331695"/>
<dbReference type="Reactome" id="R-MMU-8951664">
    <property type="pathway name" value="Neddylation"/>
</dbReference>
<dbReference type="Reactome" id="R-MMU-983168">
    <property type="pathway name" value="Antigen processing: Ubiquitination &amp; Proteasome degradation"/>
</dbReference>
<dbReference type="UniPathway" id="UPA00143"/>
<dbReference type="BioGRID-ORCS" id="117589">
    <property type="hits" value="2 hits in 77 CRISPR screens"/>
</dbReference>
<dbReference type="ChiTaRS" id="Asb7">
    <property type="organism name" value="mouse"/>
</dbReference>
<dbReference type="PRO" id="PR:Q91ZU0"/>
<dbReference type="Proteomes" id="UP000000589">
    <property type="component" value="Chromosome 7"/>
</dbReference>
<dbReference type="RNAct" id="Q91ZU0">
    <property type="molecule type" value="protein"/>
</dbReference>
<dbReference type="Bgee" id="ENSMUSG00000030509">
    <property type="expression patterns" value="Expressed in granulocyte and 219 other cell types or tissues"/>
</dbReference>
<dbReference type="ExpressionAtlas" id="Q91ZU0">
    <property type="expression patterns" value="baseline and differential"/>
</dbReference>
<dbReference type="GO" id="GO:0005737">
    <property type="term" value="C:cytoplasm"/>
    <property type="evidence" value="ECO:0007669"/>
    <property type="project" value="UniProtKB-SubCell"/>
</dbReference>
<dbReference type="GO" id="GO:0005634">
    <property type="term" value="C:nucleus"/>
    <property type="evidence" value="ECO:0007669"/>
    <property type="project" value="UniProtKB-SubCell"/>
</dbReference>
<dbReference type="GO" id="GO:0035556">
    <property type="term" value="P:intracellular signal transduction"/>
    <property type="evidence" value="ECO:0007669"/>
    <property type="project" value="InterPro"/>
</dbReference>
<dbReference type="GO" id="GO:0016567">
    <property type="term" value="P:protein ubiquitination"/>
    <property type="evidence" value="ECO:0007669"/>
    <property type="project" value="UniProtKB-UniPathway"/>
</dbReference>
<dbReference type="CDD" id="cd03726">
    <property type="entry name" value="SOCS_ASB7"/>
    <property type="match status" value="1"/>
</dbReference>
<dbReference type="FunFam" id="1.10.750.20:FF:000001">
    <property type="entry name" value="Ankyrin repeat and SOCS box containing 1"/>
    <property type="match status" value="1"/>
</dbReference>
<dbReference type="FunFam" id="1.25.40.20:FF:000147">
    <property type="entry name" value="Ankyrin repeat and SOCS box containing 7"/>
    <property type="match status" value="1"/>
</dbReference>
<dbReference type="Gene3D" id="1.25.40.20">
    <property type="entry name" value="Ankyrin repeat-containing domain"/>
    <property type="match status" value="2"/>
</dbReference>
<dbReference type="Gene3D" id="1.10.750.20">
    <property type="entry name" value="SOCS box"/>
    <property type="match status" value="1"/>
</dbReference>
<dbReference type="InterPro" id="IPR002110">
    <property type="entry name" value="Ankyrin_rpt"/>
</dbReference>
<dbReference type="InterPro" id="IPR036770">
    <property type="entry name" value="Ankyrin_rpt-contain_sf"/>
</dbReference>
<dbReference type="InterPro" id="IPR037326">
    <property type="entry name" value="ASB7_SOCS"/>
</dbReference>
<dbReference type="InterPro" id="IPR001496">
    <property type="entry name" value="SOCS_box"/>
</dbReference>
<dbReference type="InterPro" id="IPR036036">
    <property type="entry name" value="SOCS_box-like_dom_sf"/>
</dbReference>
<dbReference type="PANTHER" id="PTHR24173:SF88">
    <property type="entry name" value="ANKYRIN REPEAT AND SOCS BOX CONTAINING 7"/>
    <property type="match status" value="1"/>
</dbReference>
<dbReference type="PANTHER" id="PTHR24173">
    <property type="entry name" value="ANKYRIN REPEAT CONTAINING"/>
    <property type="match status" value="1"/>
</dbReference>
<dbReference type="Pfam" id="PF12796">
    <property type="entry name" value="Ank_2"/>
    <property type="match status" value="3"/>
</dbReference>
<dbReference type="Pfam" id="PF07525">
    <property type="entry name" value="SOCS_box"/>
    <property type="match status" value="1"/>
</dbReference>
<dbReference type="PRINTS" id="PR01415">
    <property type="entry name" value="ANKYRIN"/>
</dbReference>
<dbReference type="SMART" id="SM00248">
    <property type="entry name" value="ANK"/>
    <property type="match status" value="7"/>
</dbReference>
<dbReference type="SMART" id="SM00253">
    <property type="entry name" value="SOCS"/>
    <property type="match status" value="1"/>
</dbReference>
<dbReference type="SMART" id="SM00969">
    <property type="entry name" value="SOCS_box"/>
    <property type="match status" value="1"/>
</dbReference>
<dbReference type="SUPFAM" id="SSF48403">
    <property type="entry name" value="Ankyrin repeat"/>
    <property type="match status" value="1"/>
</dbReference>
<dbReference type="SUPFAM" id="SSF158235">
    <property type="entry name" value="SOCS box-like"/>
    <property type="match status" value="1"/>
</dbReference>
<dbReference type="PROSITE" id="PS50297">
    <property type="entry name" value="ANK_REP_REGION"/>
    <property type="match status" value="1"/>
</dbReference>
<dbReference type="PROSITE" id="PS50088">
    <property type="entry name" value="ANK_REPEAT"/>
    <property type="match status" value="5"/>
</dbReference>
<dbReference type="PROSITE" id="PS50225">
    <property type="entry name" value="SOCS"/>
    <property type="match status" value="1"/>
</dbReference>
<sequence>MLHHHCRRNPELQEELQIQAAVAAGDVHTVRKMLEQGYSPNGRDANGWTLLHFSAARGKERCVRVFLEHGADPTVKDLIGGFTALHYAAMHGRARIARLMLESEYRSDIINAKSNDGWTPLHVAAHYGRDSFVRLLLEFKAEVDPLSDKGTTPLQLAIIRERSSCVKILLDHNANIDIQNGFLLRYAVIKSNHSYCRMFLQRGADTNLGRLEDGQTPLHLSALRDDVLCARMLYNYGADTNTRNYEGQTPLAVSISISGSSRPCLDFLQDVTRQPRTLQDLCRIKIRQCIGLQNLKLLDELPIAKVMKDYLKHKFDDI</sequence>
<keyword id="KW-0040">ANK repeat</keyword>
<keyword id="KW-0963">Cytoplasm</keyword>
<keyword id="KW-0539">Nucleus</keyword>
<keyword id="KW-1185">Reference proteome</keyword>
<keyword id="KW-0677">Repeat</keyword>
<keyword id="KW-0833">Ubl conjugation pathway</keyword>